<proteinExistence type="evidence at protein level"/>
<evidence type="ECO:0000250" key="1">
    <source>
        <dbReference type="UniProtKB" id="Q13595"/>
    </source>
</evidence>
<evidence type="ECO:0000255" key="2">
    <source>
        <dbReference type="PROSITE-ProRule" id="PRU00176"/>
    </source>
</evidence>
<evidence type="ECO:0000256" key="3">
    <source>
        <dbReference type="SAM" id="MobiDB-lite"/>
    </source>
</evidence>
<evidence type="ECO:0000269" key="4">
    <source>
    </source>
</evidence>
<evidence type="ECO:0000305" key="5"/>
<evidence type="ECO:0000312" key="6">
    <source>
        <dbReference type="MGI" id="MGI:1933972"/>
    </source>
</evidence>
<evidence type="ECO:0007744" key="7">
    <source>
    </source>
</evidence>
<reference key="1">
    <citation type="journal article" date="2004" name="Genome Res.">
        <title>The status, quality, and expansion of the NIH full-length cDNA project: the Mammalian Gene Collection (MGC).</title>
        <authorList>
            <consortium name="The MGC Project Team"/>
        </authorList>
    </citation>
    <scope>NUCLEOTIDE SEQUENCE [LARGE SCALE MRNA]</scope>
    <source>
        <strain>Czech II</strain>
        <tissue>Mammary tumor</tissue>
    </source>
</reference>
<reference key="2">
    <citation type="journal article" date="2008" name="J. Proteome Res.">
        <title>Specific phosphopeptide enrichment with immobilized titanium ion affinity chromatography adsorbent for phosphoproteome analysis.</title>
        <authorList>
            <person name="Zhou H."/>
            <person name="Ye M."/>
            <person name="Dong J."/>
            <person name="Han G."/>
            <person name="Jiang X."/>
            <person name="Wu R."/>
            <person name="Zou H."/>
        </authorList>
    </citation>
    <scope>IDENTIFICATION BY MASS SPECTROMETRY [LARGE SCALE ANALYSIS]</scope>
    <source>
        <tissue>Liver</tissue>
    </source>
</reference>
<reference key="3">
    <citation type="journal article" date="2010" name="Cell">
        <title>A tissue-specific atlas of mouse protein phosphorylation and expression.</title>
        <authorList>
            <person name="Huttlin E.L."/>
            <person name="Jedrychowski M.P."/>
            <person name="Elias J.E."/>
            <person name="Goswami T."/>
            <person name="Rad R."/>
            <person name="Beausoleil S.A."/>
            <person name="Villen J."/>
            <person name="Haas W."/>
            <person name="Sowa M.E."/>
            <person name="Gygi S.P."/>
        </authorList>
    </citation>
    <scope>IDENTIFICATION BY MASS SPECTROMETRY [LARGE SCALE ANALYSIS]</scope>
    <source>
        <tissue>Spleen</tissue>
    </source>
</reference>
<reference key="4">
    <citation type="journal article" date="2014" name="Mol. Cell. Proteomics">
        <title>Immunoaffinity enrichment and mass spectrometry analysis of protein methylation.</title>
        <authorList>
            <person name="Guo A."/>
            <person name="Gu H."/>
            <person name="Zhou J."/>
            <person name="Mulhern D."/>
            <person name="Wang Y."/>
            <person name="Lee K.A."/>
            <person name="Yang V."/>
            <person name="Aguiar M."/>
            <person name="Kornhauser J."/>
            <person name="Jia X."/>
            <person name="Ren J."/>
            <person name="Beausoleil S.A."/>
            <person name="Silva J.C."/>
            <person name="Vemulapalli V."/>
            <person name="Bedford M.T."/>
            <person name="Comb M.J."/>
        </authorList>
    </citation>
    <scope>METHYLATION [LARGE SCALE ANALYSIS] AT ARG-233</scope>
    <scope>IDENTIFICATION BY MASS SPECTROMETRY [LARGE SCALE ANALYSIS]</scope>
    <source>
        <tissue>Brain</tissue>
    </source>
</reference>
<reference key="5">
    <citation type="journal article" date="2017" name="Sci. Rep.">
        <title>Angulin proteins ILDR1 and ILDR2 regulate alternative pre-mRNA splicing through binding to splicing factors TRA2A, TRA2B, or SRSF1.</title>
        <authorList>
            <person name="Liu Y."/>
            <person name="Nie H."/>
            <person name="Liu C."/>
            <person name="Zhai X."/>
            <person name="Sang Q."/>
            <person name="Wang Y."/>
            <person name="Shi D."/>
            <person name="Wang L."/>
            <person name="Xu Z."/>
        </authorList>
    </citation>
    <scope>INTERACTION WITH ILDR1</scope>
    <scope>SUBCELLULAR LOCATION</scope>
    <scope>TISSUE SPECIFICITY</scope>
</reference>
<feature type="initiator methionine" description="Removed" evidence="1">
    <location>
        <position position="1"/>
    </location>
</feature>
<feature type="chain" id="PRO_0000081982" description="Transformer-2 protein homolog alpha">
    <location>
        <begin position="2"/>
        <end position="281"/>
    </location>
</feature>
<feature type="domain" description="RRM" evidence="2">
    <location>
        <begin position="117"/>
        <end position="195"/>
    </location>
</feature>
<feature type="region of interest" description="Disordered" evidence="3">
    <location>
        <begin position="1"/>
        <end position="116"/>
    </location>
</feature>
<feature type="region of interest" description="Linker">
    <location>
        <begin position="196"/>
        <end position="223"/>
    </location>
</feature>
<feature type="region of interest" description="Disordered" evidence="3">
    <location>
        <begin position="199"/>
        <end position="281"/>
    </location>
</feature>
<feature type="compositionally biased region" description="Basic residues" evidence="3">
    <location>
        <begin position="51"/>
        <end position="82"/>
    </location>
</feature>
<feature type="compositionally biased region" description="Basic residues" evidence="3">
    <location>
        <begin position="90"/>
        <end position="108"/>
    </location>
</feature>
<feature type="compositionally biased region" description="Gly residues" evidence="3">
    <location>
        <begin position="213"/>
        <end position="231"/>
    </location>
</feature>
<feature type="compositionally biased region" description="Basic and acidic residues" evidence="3">
    <location>
        <begin position="233"/>
        <end position="257"/>
    </location>
</feature>
<feature type="compositionally biased region" description="Basic residues" evidence="3">
    <location>
        <begin position="267"/>
        <end position="281"/>
    </location>
</feature>
<feature type="modified residue" description="N-acetylserine" evidence="1">
    <location>
        <position position="2"/>
    </location>
</feature>
<feature type="modified residue" description="Phosphoserine" evidence="1">
    <location>
        <position position="2"/>
    </location>
</feature>
<feature type="modified residue" description="Phosphoserine" evidence="1">
    <location>
        <position position="14"/>
    </location>
</feature>
<feature type="modified residue" description="Phosphothreonine" evidence="1">
    <location>
        <position position="24"/>
    </location>
</feature>
<feature type="modified residue" description="Phosphoserine" evidence="1">
    <location>
        <position position="80"/>
    </location>
</feature>
<feature type="modified residue" description="Phosphoserine" evidence="1">
    <location>
        <position position="82"/>
    </location>
</feature>
<feature type="modified residue" description="Phosphoserine" evidence="1">
    <location>
        <position position="84"/>
    </location>
</feature>
<feature type="modified residue" description="Phosphothreonine" evidence="1">
    <location>
        <position position="86"/>
    </location>
</feature>
<feature type="modified residue" description="Phosphoserine" evidence="1">
    <location>
        <position position="94"/>
    </location>
</feature>
<feature type="modified residue" description="Phosphoserine" evidence="1">
    <location>
        <position position="96"/>
    </location>
</feature>
<feature type="modified residue" description="Phosphothreonine" evidence="1">
    <location>
        <position position="200"/>
    </location>
</feature>
<feature type="modified residue" description="Phosphothreonine" evidence="1">
    <location>
        <position position="202"/>
    </location>
</feature>
<feature type="modified residue" description="Omega-N-methylarginine" evidence="7">
    <location>
        <position position="233"/>
    </location>
</feature>
<feature type="modified residue" description="Phosphoserine" evidence="1">
    <location>
        <position position="237"/>
    </location>
</feature>
<feature type="cross-link" description="Glycyl lysine isopeptide (Lys-Gly) (interchain with G-Cter in SUMO2)" evidence="1">
    <location>
        <position position="196"/>
    </location>
</feature>
<protein>
    <recommendedName>
        <fullName evidence="5">Transformer-2 protein homolog alpha</fullName>
        <shortName>TRA-2 alpha</shortName>
        <shortName>TRA2-alpha</shortName>
    </recommendedName>
    <alternativeName>
        <fullName>Transformer-2 protein homolog A</fullName>
    </alternativeName>
</protein>
<keyword id="KW-0007">Acetylation</keyword>
<keyword id="KW-1017">Isopeptide bond</keyword>
<keyword id="KW-0488">Methylation</keyword>
<keyword id="KW-0507">mRNA processing</keyword>
<keyword id="KW-0508">mRNA splicing</keyword>
<keyword id="KW-0539">Nucleus</keyword>
<keyword id="KW-0597">Phosphoprotein</keyword>
<keyword id="KW-1185">Reference proteome</keyword>
<keyword id="KW-0694">RNA-binding</keyword>
<keyword id="KW-0832">Ubl conjugation</keyword>
<organism>
    <name type="scientific">Mus musculus</name>
    <name type="common">Mouse</name>
    <dbReference type="NCBI Taxonomy" id="10090"/>
    <lineage>
        <taxon>Eukaryota</taxon>
        <taxon>Metazoa</taxon>
        <taxon>Chordata</taxon>
        <taxon>Craniata</taxon>
        <taxon>Vertebrata</taxon>
        <taxon>Euteleostomi</taxon>
        <taxon>Mammalia</taxon>
        <taxon>Eutheria</taxon>
        <taxon>Euarchontoglires</taxon>
        <taxon>Glires</taxon>
        <taxon>Rodentia</taxon>
        <taxon>Myomorpha</taxon>
        <taxon>Muroidea</taxon>
        <taxon>Muridae</taxon>
        <taxon>Murinae</taxon>
        <taxon>Mus</taxon>
        <taxon>Mus</taxon>
    </lineage>
</organism>
<dbReference type="EMBL" id="BC057448">
    <property type="protein sequence ID" value="AAH57448.1"/>
    <property type="molecule type" value="mRNA"/>
</dbReference>
<dbReference type="SMR" id="Q6PFR5"/>
<dbReference type="FunCoup" id="Q6PFR5">
    <property type="interactions" value="3308"/>
</dbReference>
<dbReference type="IntAct" id="Q6PFR5">
    <property type="interactions" value="5"/>
</dbReference>
<dbReference type="STRING" id="10090.ENSMUSP00000031841"/>
<dbReference type="GlyGen" id="Q6PFR5">
    <property type="glycosylation" value="2 sites"/>
</dbReference>
<dbReference type="iPTMnet" id="Q6PFR5"/>
<dbReference type="PhosphoSitePlus" id="Q6PFR5"/>
<dbReference type="jPOST" id="Q6PFR5"/>
<dbReference type="PaxDb" id="10090-ENSMUSP00000031841"/>
<dbReference type="PeptideAtlas" id="Q6PFR5"/>
<dbReference type="ProteomicsDB" id="258842"/>
<dbReference type="Pumba" id="Q6PFR5"/>
<dbReference type="UCSC" id="uc009bwm.1">
    <property type="organism name" value="mouse"/>
</dbReference>
<dbReference type="AGR" id="MGI:1933972"/>
<dbReference type="MGI" id="MGI:1933972">
    <property type="gene designation" value="Tra2a"/>
</dbReference>
<dbReference type="eggNOG" id="KOG0118">
    <property type="taxonomic scope" value="Eukaryota"/>
</dbReference>
<dbReference type="InParanoid" id="Q6PFR5"/>
<dbReference type="PhylomeDB" id="Q6PFR5"/>
<dbReference type="ChiTaRS" id="Tra2a">
    <property type="organism name" value="mouse"/>
</dbReference>
<dbReference type="PRO" id="PR:Q6PFR5"/>
<dbReference type="Proteomes" id="UP000000589">
    <property type="component" value="Unplaced"/>
</dbReference>
<dbReference type="RNAct" id="Q6PFR5">
    <property type="molecule type" value="protein"/>
</dbReference>
<dbReference type="GO" id="GO:0005634">
    <property type="term" value="C:nucleus"/>
    <property type="evidence" value="ECO:0000314"/>
    <property type="project" value="UniProtKB"/>
</dbReference>
<dbReference type="GO" id="GO:0042802">
    <property type="term" value="F:identical protein binding"/>
    <property type="evidence" value="ECO:0000353"/>
    <property type="project" value="IntAct"/>
</dbReference>
<dbReference type="GO" id="GO:0003723">
    <property type="term" value="F:RNA binding"/>
    <property type="evidence" value="ECO:0000250"/>
    <property type="project" value="MGI"/>
</dbReference>
<dbReference type="GO" id="GO:0006397">
    <property type="term" value="P:mRNA processing"/>
    <property type="evidence" value="ECO:0007669"/>
    <property type="project" value="UniProtKB-KW"/>
</dbReference>
<dbReference type="GO" id="GO:0048026">
    <property type="term" value="P:positive regulation of mRNA splicing, via spliceosome"/>
    <property type="evidence" value="ECO:0000314"/>
    <property type="project" value="MGI"/>
</dbReference>
<dbReference type="GO" id="GO:0008380">
    <property type="term" value="P:RNA splicing"/>
    <property type="evidence" value="ECO:0007669"/>
    <property type="project" value="UniProtKB-KW"/>
</dbReference>
<dbReference type="CDD" id="cd12363">
    <property type="entry name" value="RRM_TRA2"/>
    <property type="match status" value="1"/>
</dbReference>
<dbReference type="FunFam" id="3.30.70.330:FF:000200">
    <property type="entry name" value="transformer-2 protein homolog alpha"/>
    <property type="match status" value="1"/>
</dbReference>
<dbReference type="Gene3D" id="3.30.70.330">
    <property type="match status" value="1"/>
</dbReference>
<dbReference type="InterPro" id="IPR012677">
    <property type="entry name" value="Nucleotide-bd_a/b_plait_sf"/>
</dbReference>
<dbReference type="InterPro" id="IPR035979">
    <property type="entry name" value="RBD_domain_sf"/>
</dbReference>
<dbReference type="InterPro" id="IPR050441">
    <property type="entry name" value="RBM"/>
</dbReference>
<dbReference type="InterPro" id="IPR000504">
    <property type="entry name" value="RRM_dom"/>
</dbReference>
<dbReference type="PANTHER" id="PTHR48034">
    <property type="entry name" value="TRANSFORMER-2 SEX-DETERMINING PROTEIN-RELATED"/>
    <property type="match status" value="1"/>
</dbReference>
<dbReference type="Pfam" id="PF00076">
    <property type="entry name" value="RRM_1"/>
    <property type="match status" value="1"/>
</dbReference>
<dbReference type="SMART" id="SM00360">
    <property type="entry name" value="RRM"/>
    <property type="match status" value="1"/>
</dbReference>
<dbReference type="SUPFAM" id="SSF54928">
    <property type="entry name" value="RNA-binding domain, RBD"/>
    <property type="match status" value="1"/>
</dbReference>
<dbReference type="PROSITE" id="PS50102">
    <property type="entry name" value="RRM"/>
    <property type="match status" value="1"/>
</dbReference>
<name>TRA2A_MOUSE</name>
<accession>Q6PFR5</accession>
<gene>
    <name evidence="6" type="primary">Tra2a</name>
</gene>
<sequence>MSDVEENNFEGRESRSQSKSPTGTPARVKSESRSGSRSPSRVSKHSESHSRSRSKSRSRSRRHSHRRYTRSRSHSHRRRSRSRSYTPEYRRRRSRSHSPMSNRRRHTGSRANPDPNTCLGVFGLSLYTTERDLREVFSRYGPLSGVNVVYDQRTGRSRGFAFVYFERIDDSKEAMERANGMELDGRRIRVDYSITKRAHTPTPGIYMGRPTHSGGGGGGGGGGGGGGGGGGGRRRDSYYDRGYDRGYDRYEDYDYRRRSPSPYYSRYRSRSRSRSYSPRRY</sequence>
<comment type="function">
    <text evidence="1">Sequence-specific RNA-binding protein which participates in the control of pre-mRNA splicing.</text>
</comment>
<comment type="subunit">
    <text evidence="4 5">Binds to A3 enhancer proteins SRp75, SRp55, SRp40 and SRp30 (Probable). Interacts with ILDR1 (via C-terminus) and ILDR2 (PubMed:28785060).</text>
</comment>
<comment type="interaction">
    <interactant intactId="EBI-913075">
        <id>Q6PFR5</id>
    </interactant>
    <interactant intactId="EBI-913097">
        <id>Q9D1X0</id>
        <label>Nol3</label>
    </interactant>
    <organismsDiffer>false</organismsDiffer>
    <experiments>4</experiments>
</comment>
<comment type="interaction">
    <interactant intactId="EBI-913075">
        <id>Q6PFR5</id>
    </interactant>
    <interactant intactId="EBI-913123">
        <id>Q8BL97</id>
        <label>Srsf7</label>
    </interactant>
    <organismsDiffer>false</organismsDiffer>
    <experiments>4</experiments>
</comment>
<comment type="interaction">
    <interactant intactId="EBI-913075">
        <id>Q6PFR5</id>
    </interactant>
    <interactant intactId="EBI-913075">
        <id>Q6PFR5</id>
        <label>Tra2a</label>
    </interactant>
    <organismsDiffer>false</organismsDiffer>
    <experiments>2</experiments>
</comment>
<comment type="subcellular location">
    <subcellularLocation>
        <location evidence="4">Nucleus</location>
    </subcellularLocation>
</comment>
<comment type="tissue specificity">
    <text evidence="4">Expressed in inner ear.</text>
</comment>
<comment type="PTM">
    <text evidence="1">Phosphorylated in the RS domains.</text>
</comment>
<comment type="similarity">
    <text evidence="5">Belongs to the splicing factor SR family.</text>
</comment>